<feature type="chain" id="PRO_1000114648" description="Nucleoid-associated protein Swoo_1794">
    <location>
        <begin position="1"/>
        <end position="109"/>
    </location>
</feature>
<feature type="region of interest" description="Disordered" evidence="2">
    <location>
        <begin position="88"/>
        <end position="109"/>
    </location>
</feature>
<evidence type="ECO:0000255" key="1">
    <source>
        <dbReference type="HAMAP-Rule" id="MF_00274"/>
    </source>
</evidence>
<evidence type="ECO:0000256" key="2">
    <source>
        <dbReference type="SAM" id="MobiDB-lite"/>
    </source>
</evidence>
<name>Y1794_SHEWM</name>
<protein>
    <recommendedName>
        <fullName evidence="1">Nucleoid-associated protein Swoo_1794</fullName>
    </recommendedName>
</protein>
<sequence length="109" mass="11873">MFGKGGMGNLMKQAQQMQDKMAKVQEEIARMEVTGEAGAGLVKVTMTGSHSVRKVDIDPSLLEDDKEMLEDLIAAACNDAARRVEENQKDKMAEVTGGMQLPPGMKMPF</sequence>
<proteinExistence type="inferred from homology"/>
<gene>
    <name type="ordered locus">Swoo_1794</name>
</gene>
<accession>B1KNK1</accession>
<dbReference type="EMBL" id="CP000961">
    <property type="protein sequence ID" value="ACA86078.1"/>
    <property type="molecule type" value="Genomic_DNA"/>
</dbReference>
<dbReference type="RefSeq" id="WP_012324424.1">
    <property type="nucleotide sequence ID" value="NC_010506.1"/>
</dbReference>
<dbReference type="SMR" id="B1KNK1"/>
<dbReference type="STRING" id="392500.Swoo_1794"/>
<dbReference type="KEGG" id="swd:Swoo_1794"/>
<dbReference type="eggNOG" id="COG0718">
    <property type="taxonomic scope" value="Bacteria"/>
</dbReference>
<dbReference type="HOGENOM" id="CLU_140930_0_0_6"/>
<dbReference type="Proteomes" id="UP000002168">
    <property type="component" value="Chromosome"/>
</dbReference>
<dbReference type="GO" id="GO:0043590">
    <property type="term" value="C:bacterial nucleoid"/>
    <property type="evidence" value="ECO:0007669"/>
    <property type="project" value="UniProtKB-UniRule"/>
</dbReference>
<dbReference type="GO" id="GO:0005829">
    <property type="term" value="C:cytosol"/>
    <property type="evidence" value="ECO:0007669"/>
    <property type="project" value="TreeGrafter"/>
</dbReference>
<dbReference type="GO" id="GO:0003677">
    <property type="term" value="F:DNA binding"/>
    <property type="evidence" value="ECO:0007669"/>
    <property type="project" value="UniProtKB-UniRule"/>
</dbReference>
<dbReference type="FunFam" id="3.30.1310.10:FF:000001">
    <property type="entry name" value="Nucleoid-associated protein YbaB"/>
    <property type="match status" value="1"/>
</dbReference>
<dbReference type="Gene3D" id="3.30.1310.10">
    <property type="entry name" value="Nucleoid-associated protein YbaB-like domain"/>
    <property type="match status" value="1"/>
</dbReference>
<dbReference type="HAMAP" id="MF_00274">
    <property type="entry name" value="DNA_YbaB_EbfC"/>
    <property type="match status" value="1"/>
</dbReference>
<dbReference type="InterPro" id="IPR036894">
    <property type="entry name" value="YbaB-like_sf"/>
</dbReference>
<dbReference type="InterPro" id="IPR004401">
    <property type="entry name" value="YbaB/EbfC"/>
</dbReference>
<dbReference type="NCBIfam" id="TIGR00103">
    <property type="entry name" value="DNA_YbaB_EbfC"/>
    <property type="match status" value="1"/>
</dbReference>
<dbReference type="PANTHER" id="PTHR33449">
    <property type="entry name" value="NUCLEOID-ASSOCIATED PROTEIN YBAB"/>
    <property type="match status" value="1"/>
</dbReference>
<dbReference type="PANTHER" id="PTHR33449:SF1">
    <property type="entry name" value="NUCLEOID-ASSOCIATED PROTEIN YBAB"/>
    <property type="match status" value="1"/>
</dbReference>
<dbReference type="Pfam" id="PF02575">
    <property type="entry name" value="YbaB_DNA_bd"/>
    <property type="match status" value="1"/>
</dbReference>
<dbReference type="PIRSF" id="PIRSF004555">
    <property type="entry name" value="UCP004555"/>
    <property type="match status" value="1"/>
</dbReference>
<dbReference type="SUPFAM" id="SSF82607">
    <property type="entry name" value="YbaB-like"/>
    <property type="match status" value="1"/>
</dbReference>
<organism>
    <name type="scientific">Shewanella woodyi (strain ATCC 51908 / MS32)</name>
    <dbReference type="NCBI Taxonomy" id="392500"/>
    <lineage>
        <taxon>Bacteria</taxon>
        <taxon>Pseudomonadati</taxon>
        <taxon>Pseudomonadota</taxon>
        <taxon>Gammaproteobacteria</taxon>
        <taxon>Alteromonadales</taxon>
        <taxon>Shewanellaceae</taxon>
        <taxon>Shewanella</taxon>
    </lineage>
</organism>
<comment type="function">
    <text evidence="1">Binds to DNA and alters its conformation. May be involved in regulation of gene expression, nucleoid organization and DNA protection.</text>
</comment>
<comment type="subunit">
    <text evidence="1">Homodimer.</text>
</comment>
<comment type="subcellular location">
    <subcellularLocation>
        <location evidence="1">Cytoplasm</location>
        <location evidence="1">Nucleoid</location>
    </subcellularLocation>
</comment>
<comment type="similarity">
    <text evidence="1">Belongs to the YbaB/EbfC family.</text>
</comment>
<reference key="1">
    <citation type="submission" date="2008-02" db="EMBL/GenBank/DDBJ databases">
        <title>Complete sequence of Shewanella woodyi ATCC 51908.</title>
        <authorList>
            <consortium name="US DOE Joint Genome Institute"/>
            <person name="Copeland A."/>
            <person name="Lucas S."/>
            <person name="Lapidus A."/>
            <person name="Glavina del Rio T."/>
            <person name="Dalin E."/>
            <person name="Tice H."/>
            <person name="Bruce D."/>
            <person name="Goodwin L."/>
            <person name="Pitluck S."/>
            <person name="Sims D."/>
            <person name="Brettin T."/>
            <person name="Detter J.C."/>
            <person name="Han C."/>
            <person name="Kuske C.R."/>
            <person name="Schmutz J."/>
            <person name="Larimer F."/>
            <person name="Land M."/>
            <person name="Hauser L."/>
            <person name="Kyrpides N."/>
            <person name="Lykidis A."/>
            <person name="Zhao J.-S."/>
            <person name="Richardson P."/>
        </authorList>
    </citation>
    <scope>NUCLEOTIDE SEQUENCE [LARGE SCALE GENOMIC DNA]</scope>
    <source>
        <strain>ATCC 51908 / MS32</strain>
    </source>
</reference>
<keyword id="KW-0963">Cytoplasm</keyword>
<keyword id="KW-0238">DNA-binding</keyword>
<keyword id="KW-1185">Reference proteome</keyword>